<keyword id="KW-0235">DNA replication</keyword>
<keyword id="KW-0238">DNA-binding</keyword>
<keyword id="KW-1185">Reference proteome</keyword>
<proteinExistence type="inferred from homology"/>
<name>PCNA_NANEQ</name>
<sequence length="249" mass="28115">MRVTFPDAKALKKIVPIVADLISEGQFVATEEGIKLVAMDPASIAMVIWEMKPEAFIDYTIEGDKEIITVSMDDLKTIVKKLKQREMVVWETDREKNKLKILARGTIKKTFSIPLLEGEETETPIPSLEYNNVVELDSKAIKEIIDDASAIADSLKFKAEPPSKLIIKAEGEMKEMTVELTEGEDAVVSIDIQEEAYASYSIDYLKKFAKAADVSDIAILKLKTDYPLWLEYRYLDKMTLIFILAPRSD</sequence>
<reference key="1">
    <citation type="journal article" date="2003" name="Proc. Natl. Acad. Sci. U.S.A.">
        <title>The genome of Nanoarchaeum equitans: insights into early archaeal evolution and derived parasitism.</title>
        <authorList>
            <person name="Waters E."/>
            <person name="Hohn M.J."/>
            <person name="Ahel I."/>
            <person name="Graham D.E."/>
            <person name="Adams M.D."/>
            <person name="Barnstead M."/>
            <person name="Beeson K.Y."/>
            <person name="Bibbs L."/>
            <person name="Bolanos R."/>
            <person name="Keller M."/>
            <person name="Kretz K."/>
            <person name="Lin X."/>
            <person name="Mathur E."/>
            <person name="Ni J."/>
            <person name="Podar M."/>
            <person name="Richardson T."/>
            <person name="Sutton G.G."/>
            <person name="Simon M."/>
            <person name="Soell D."/>
            <person name="Stetter K.O."/>
            <person name="Short J.M."/>
            <person name="Noorderwier M."/>
        </authorList>
    </citation>
    <scope>NUCLEOTIDE SEQUENCE [LARGE SCALE GENOMIC DNA]</scope>
    <source>
        <strain>Kin4-M</strain>
    </source>
</reference>
<organism>
    <name type="scientific">Nanoarchaeum equitans (strain Kin4-M)</name>
    <dbReference type="NCBI Taxonomy" id="228908"/>
    <lineage>
        <taxon>Archaea</taxon>
        <taxon>Nanobdellota</taxon>
        <taxon>Candidatus Nanoarchaeia</taxon>
        <taxon>Nanoarchaeales</taxon>
        <taxon>Nanoarchaeaceae</taxon>
        <taxon>Nanoarchaeum</taxon>
    </lineage>
</organism>
<protein>
    <recommendedName>
        <fullName evidence="1">DNA polymerase sliding clamp</fullName>
    </recommendedName>
    <alternativeName>
        <fullName evidence="1">Proliferating cell nuclear antigen homolog</fullName>
        <shortName evidence="1">PCNA</shortName>
    </alternativeName>
</protein>
<accession>Q74MV1</accession>
<comment type="function">
    <text evidence="1">Sliding clamp subunit that acts as a moving platform for DNA processing. Responsible for tethering the catalytic subunit of DNA polymerase and other proteins to DNA during high-speed replication.</text>
</comment>
<comment type="subunit">
    <text evidence="1">Homotrimer. The subunits circularize to form a toroid; DNA passes through its center. Replication factor C (RFC) is required to load the toroid on the DNA.</text>
</comment>
<comment type="similarity">
    <text evidence="1">Belongs to the PCNA family.</text>
</comment>
<comment type="sequence caution" evidence="2">
    <conflict type="erroneous initiation">
        <sequence resource="EMBL-CDS" id="AAR39379"/>
    </conflict>
    <text>Extended N-terminus.</text>
</comment>
<feature type="chain" id="PRO_0000149201" description="DNA polymerase sliding clamp">
    <location>
        <begin position="1"/>
        <end position="249"/>
    </location>
</feature>
<gene>
    <name evidence="1" type="primary">pcn</name>
    <name type="ordered locus">NEQ537</name>
</gene>
<evidence type="ECO:0000255" key="1">
    <source>
        <dbReference type="HAMAP-Rule" id="MF_00317"/>
    </source>
</evidence>
<evidence type="ECO:0000305" key="2"/>
<dbReference type="EMBL" id="AE017199">
    <property type="protein sequence ID" value="AAR39379.1"/>
    <property type="status" value="ALT_INIT"/>
    <property type="molecule type" value="Genomic_DNA"/>
</dbReference>
<dbReference type="SMR" id="Q74MV1"/>
<dbReference type="STRING" id="228908.NEQ537"/>
<dbReference type="EnsemblBacteria" id="AAR39379">
    <property type="protein sequence ID" value="AAR39379"/>
    <property type="gene ID" value="NEQ537"/>
</dbReference>
<dbReference type="KEGG" id="neq:NEQ537"/>
<dbReference type="HOGENOM" id="CLU_043978_1_1_2"/>
<dbReference type="Proteomes" id="UP000000578">
    <property type="component" value="Chromosome"/>
</dbReference>
<dbReference type="GO" id="GO:0003677">
    <property type="term" value="F:DNA binding"/>
    <property type="evidence" value="ECO:0007669"/>
    <property type="project" value="UniProtKB-UniRule"/>
</dbReference>
<dbReference type="GO" id="GO:0030337">
    <property type="term" value="F:DNA polymerase processivity factor activity"/>
    <property type="evidence" value="ECO:0007669"/>
    <property type="project" value="UniProtKB-UniRule"/>
</dbReference>
<dbReference type="GO" id="GO:0006272">
    <property type="term" value="P:leading strand elongation"/>
    <property type="evidence" value="ECO:0007669"/>
    <property type="project" value="TreeGrafter"/>
</dbReference>
<dbReference type="GO" id="GO:0006275">
    <property type="term" value="P:regulation of DNA replication"/>
    <property type="evidence" value="ECO:0007669"/>
    <property type="project" value="UniProtKB-UniRule"/>
</dbReference>
<dbReference type="CDD" id="cd00577">
    <property type="entry name" value="PCNA"/>
    <property type="match status" value="1"/>
</dbReference>
<dbReference type="Gene3D" id="3.70.10.10">
    <property type="match status" value="1"/>
</dbReference>
<dbReference type="HAMAP" id="MF_00317">
    <property type="entry name" value="DNApol_clamp_arch"/>
    <property type="match status" value="1"/>
</dbReference>
<dbReference type="InterPro" id="IPR046938">
    <property type="entry name" value="DNA_clamp_sf"/>
</dbReference>
<dbReference type="InterPro" id="IPR000730">
    <property type="entry name" value="Pr_cel_nuc_antig"/>
</dbReference>
<dbReference type="InterPro" id="IPR022649">
    <property type="entry name" value="Pr_cel_nuc_antig_C"/>
</dbReference>
<dbReference type="InterPro" id="IPR022648">
    <property type="entry name" value="Pr_cel_nuc_antig_N"/>
</dbReference>
<dbReference type="NCBIfam" id="TIGR00590">
    <property type="entry name" value="pcna"/>
    <property type="match status" value="1"/>
</dbReference>
<dbReference type="PANTHER" id="PTHR11352">
    <property type="entry name" value="PROLIFERATING CELL NUCLEAR ANTIGEN"/>
    <property type="match status" value="1"/>
</dbReference>
<dbReference type="PANTHER" id="PTHR11352:SF0">
    <property type="entry name" value="PROLIFERATING CELL NUCLEAR ANTIGEN"/>
    <property type="match status" value="1"/>
</dbReference>
<dbReference type="Pfam" id="PF02747">
    <property type="entry name" value="PCNA_C"/>
    <property type="match status" value="1"/>
</dbReference>
<dbReference type="Pfam" id="PF00705">
    <property type="entry name" value="PCNA_N"/>
    <property type="match status" value="1"/>
</dbReference>
<dbReference type="SUPFAM" id="SSF55979">
    <property type="entry name" value="DNA clamp"/>
    <property type="match status" value="2"/>
</dbReference>